<sequence>MSSSQQSGRANELRTPGRANSSSREAVDSSPLFFPASSPGSTRLTTPRTTARTPLASSPLLFESSSPGPNIPQSSRSHLLSQRNDLFLDSSSQRTPRSTRRGDIHSSVQMSTPSRRREVDPQRPGVSTPSSLLFSGSDALTFSQAHPSSEVADDTVRVIWGTNVSIQESIASFRGFLRGFKKKYRPEYRNELMPPPDAEQLVYIEALRNMRIMGLEILNLDVQDLKHYPPTKKLYHQLYSYPQEIIPIMDQTIKDVMLDLLGTNPPEDVLNDIELKIYKIRPFNLEKCINMRDLNPGDIDKLISIKGLVLRCTPVIPDMKQAFFRCSVCGHCVTVEIDRGRIAEPIKCPREVCGATNAMQLIHNRSEFADKQVIKLQETPDVVPDGQTPHSVSLCVYDELVDSARAGDRIEVTGIFRCVPVRLNPRMRTVKSLFKTYVDVVHIKKQDKRRLGTDPSTLESDIAEDAALQIDEVRKISDEEVEKIQQVSKRDDIYDILSRSLAPSIYEMDDVKKGLLLQLFGGTNKSFHKGASPRYRGDINILMCGDPSTSKSQILKYVHKIAPRGVYTSGKGSSAVGLTAYITRDQDTKQLVLESGALVLSDGGICCIDEFDKMSDATRSILHEVMEQQTVTVAKAGIITTLNARTSILASANPIGSKYNPDLPVTKNIDLPPTLLSRFDLVYLILDRVDETLDRKLANHIVSMYMEDTPEHATDMEVFSVEFLTSYITYARNNINPVISEEAAKELVNAYVGMRKLGEDVRASEKRITATTRQLESMIRLSEAHAKMHLRNVVEVGDVLEAARLIKTAIKDYATDPATGKISLDLIYVNERETLVPEDMVKELANLISNLTVGGKTMLVSQLLTRFREQSSTRLDASDFEACLGALERRGRIKVITSAGHRIVRSIAQTD</sequence>
<protein>
    <recommendedName>
        <fullName>DNA replication licensing factor mcm4</fullName>
        <ecNumber>3.6.4.12</ecNumber>
    </recommendedName>
    <alternativeName>
        <fullName>Cell division control protein 21</fullName>
    </alternativeName>
    <alternativeName>
        <fullName>Minichromosome maintenance protein 4</fullName>
    </alternativeName>
</protein>
<keyword id="KW-0067">ATP-binding</keyword>
<keyword id="KW-0235">DNA replication</keyword>
<keyword id="KW-0238">DNA-binding</keyword>
<keyword id="KW-0347">Helicase</keyword>
<keyword id="KW-0378">Hydrolase</keyword>
<keyword id="KW-0547">Nucleotide-binding</keyword>
<keyword id="KW-0539">Nucleus</keyword>
<keyword id="KW-0597">Phosphoprotein</keyword>
<keyword id="KW-1185">Reference proteome</keyword>
<gene>
    <name type="primary">mcm4</name>
    <name type="synonym">cdc21</name>
    <name type="ORF">SPCC16A11.17</name>
    <name type="ORF">SPCC24B10.01</name>
</gene>
<proteinExistence type="evidence at protein level"/>
<evidence type="ECO:0000250" key="1"/>
<evidence type="ECO:0000255" key="2"/>
<evidence type="ECO:0000256" key="3">
    <source>
        <dbReference type="SAM" id="MobiDB-lite"/>
    </source>
</evidence>
<evidence type="ECO:0000269" key="4">
    <source>
    </source>
</evidence>
<evidence type="ECO:0000269" key="5">
    <source>
    </source>
</evidence>
<evidence type="ECO:0000305" key="6"/>
<comment type="function">
    <text evidence="1">Acts as a component of the mcm2-7 complex (mcm complex) which is the putative replicative helicase essential for 'once per cell cycle' DNA replication initiation and elongation in eukaryotic cells. The active ATPase sites in the mcm2-7 ring are formed through the interaction surfaces of two neighboring subunits such that a critical structure of a conserved arginine finger motif is provided in trans relative to the ATP-binding site of the Walker A box of the adjacent subunit. The six ATPase active sites, however, are likely to contribute differentially to the complex helicase activity (By similarity). Required for S phase execution.</text>
</comment>
<comment type="catalytic activity">
    <reaction>
        <text>ATP + H2O = ADP + phosphate + H(+)</text>
        <dbReference type="Rhea" id="RHEA:13065"/>
        <dbReference type="ChEBI" id="CHEBI:15377"/>
        <dbReference type="ChEBI" id="CHEBI:15378"/>
        <dbReference type="ChEBI" id="CHEBI:30616"/>
        <dbReference type="ChEBI" id="CHEBI:43474"/>
        <dbReference type="ChEBI" id="CHEBI:456216"/>
        <dbReference type="EC" id="3.6.4.12"/>
    </reaction>
</comment>
<comment type="subunit">
    <text evidence="4 6">Component of the mcm2-7 complex. The complex forms a toroidal hexameric ring with the proposed subunit order mcm2-mcm6-mcm4-mcm7-mcm3-mcm5 (Probable). The heterodimers of mcm4/mcm6 and mcm3/mcm5 interact with mcm2 and mcm7.</text>
</comment>
<comment type="interaction">
    <interactant intactId="EBI-913806">
        <id>P29458</id>
    </interactant>
    <interactant intactId="EBI-1387246">
        <id>O42709</id>
        <label>mcm10</label>
    </interactant>
    <organismsDiffer>false</organismsDiffer>
    <experiments>3</experiments>
</comment>
<comment type="interaction">
    <interactant intactId="EBI-913806">
        <id>P29458</id>
    </interactant>
    <interactant intactId="EBI-7492115">
        <id>O94450</id>
        <label>SPAC1687.04</label>
    </interactant>
    <organismsDiffer>false</organismsDiffer>
    <experiments>3</experiments>
</comment>
<comment type="subcellular location">
    <subcellularLocation>
        <location>Nucleus</location>
    </subcellularLocation>
</comment>
<comment type="similarity">
    <text evidence="6">Belongs to the MCM family.</text>
</comment>
<accession>P29458</accession>
<accession>Q9P7K4</accession>
<accession>Q9USM0</accession>
<feature type="chain" id="PRO_0000194106" description="DNA replication licensing factor mcm4">
    <location>
        <begin position="1"/>
        <end position="911"/>
    </location>
</feature>
<feature type="domain" description="MCM">
    <location>
        <begin position="493"/>
        <end position="702"/>
    </location>
</feature>
<feature type="region of interest" description="Disordered" evidence="3">
    <location>
        <begin position="1"/>
        <end position="132"/>
    </location>
</feature>
<feature type="short sequence motif" description="Arginine finger">
    <location>
        <begin position="677"/>
        <end position="680"/>
    </location>
</feature>
<feature type="compositionally biased region" description="Low complexity" evidence="3">
    <location>
        <begin position="42"/>
        <end position="56"/>
    </location>
</feature>
<feature type="compositionally biased region" description="Polar residues" evidence="3">
    <location>
        <begin position="63"/>
        <end position="84"/>
    </location>
</feature>
<feature type="binding site" evidence="2">
    <location>
        <begin position="545"/>
        <end position="552"/>
    </location>
    <ligand>
        <name>ATP</name>
        <dbReference type="ChEBI" id="CHEBI:30616"/>
    </ligand>
</feature>
<feature type="modified residue" description="Phosphoserine" evidence="5">
    <location>
        <position position="37"/>
    </location>
</feature>
<feature type="modified residue" description="Phosphoserine" evidence="5">
    <location>
        <position position="38"/>
    </location>
</feature>
<feature type="modified residue" description="Phosphoserine" evidence="5">
    <location>
        <position position="41"/>
    </location>
</feature>
<feature type="modified residue" description="Phosphoserine" evidence="5">
    <location>
        <position position="92"/>
    </location>
</feature>
<feature type="sequence conflict" description="In Ref. 2; CAA41628." evidence="6" ref="2">
    <original>D</original>
    <variation>DASDFEACLGAFREQSSTRLD</variation>
    <location>
        <position position="876"/>
    </location>
</feature>
<name>MCM4_SCHPO</name>
<reference key="1">
    <citation type="journal article" date="1992" name="Nucleic Acids Res.">
        <title>Fission yeast cdc21+ belongs to a family of proteins involved in an early step of chromosome replication.</title>
        <authorList>
            <person name="Coxon A."/>
            <person name="Maundrell K."/>
            <person name="Kearsey S.E."/>
        </authorList>
    </citation>
    <scope>NUCLEOTIDE SEQUENCE [GENOMIC DNA]</scope>
</reference>
<reference key="2">
    <citation type="submission" date="1999-01" db="EMBL/GenBank/DDBJ databases">
        <authorList>
            <person name="Kearsey S.E."/>
        </authorList>
    </citation>
    <scope>SEQUENCE REVISION TO C-TERMINUS</scope>
</reference>
<reference key="3">
    <citation type="journal article" date="2002" name="Nature">
        <title>The genome sequence of Schizosaccharomyces pombe.</title>
        <authorList>
            <person name="Wood V."/>
            <person name="Gwilliam R."/>
            <person name="Rajandream M.A."/>
            <person name="Lyne M.H."/>
            <person name="Lyne R."/>
            <person name="Stewart A."/>
            <person name="Sgouros J.G."/>
            <person name="Peat N."/>
            <person name="Hayles J."/>
            <person name="Baker S.G."/>
            <person name="Basham D."/>
            <person name="Bowman S."/>
            <person name="Brooks K."/>
            <person name="Brown D."/>
            <person name="Brown S."/>
            <person name="Chillingworth T."/>
            <person name="Churcher C.M."/>
            <person name="Collins M."/>
            <person name="Connor R."/>
            <person name="Cronin A."/>
            <person name="Davis P."/>
            <person name="Feltwell T."/>
            <person name="Fraser A."/>
            <person name="Gentles S."/>
            <person name="Goble A."/>
            <person name="Hamlin N."/>
            <person name="Harris D.E."/>
            <person name="Hidalgo J."/>
            <person name="Hodgson G."/>
            <person name="Holroyd S."/>
            <person name="Hornsby T."/>
            <person name="Howarth S."/>
            <person name="Huckle E.J."/>
            <person name="Hunt S."/>
            <person name="Jagels K."/>
            <person name="James K.D."/>
            <person name="Jones L."/>
            <person name="Jones M."/>
            <person name="Leather S."/>
            <person name="McDonald S."/>
            <person name="McLean J."/>
            <person name="Mooney P."/>
            <person name="Moule S."/>
            <person name="Mungall K.L."/>
            <person name="Murphy L.D."/>
            <person name="Niblett D."/>
            <person name="Odell C."/>
            <person name="Oliver K."/>
            <person name="O'Neil S."/>
            <person name="Pearson D."/>
            <person name="Quail M.A."/>
            <person name="Rabbinowitsch E."/>
            <person name="Rutherford K.M."/>
            <person name="Rutter S."/>
            <person name="Saunders D."/>
            <person name="Seeger K."/>
            <person name="Sharp S."/>
            <person name="Skelton J."/>
            <person name="Simmonds M.N."/>
            <person name="Squares R."/>
            <person name="Squares S."/>
            <person name="Stevens K."/>
            <person name="Taylor K."/>
            <person name="Taylor R.G."/>
            <person name="Tivey A."/>
            <person name="Walsh S.V."/>
            <person name="Warren T."/>
            <person name="Whitehead S."/>
            <person name="Woodward J.R."/>
            <person name="Volckaert G."/>
            <person name="Aert R."/>
            <person name="Robben J."/>
            <person name="Grymonprez B."/>
            <person name="Weltjens I."/>
            <person name="Vanstreels E."/>
            <person name="Rieger M."/>
            <person name="Schaefer M."/>
            <person name="Mueller-Auer S."/>
            <person name="Gabel C."/>
            <person name="Fuchs M."/>
            <person name="Duesterhoeft A."/>
            <person name="Fritzc C."/>
            <person name="Holzer E."/>
            <person name="Moestl D."/>
            <person name="Hilbert H."/>
            <person name="Borzym K."/>
            <person name="Langer I."/>
            <person name="Beck A."/>
            <person name="Lehrach H."/>
            <person name="Reinhardt R."/>
            <person name="Pohl T.M."/>
            <person name="Eger P."/>
            <person name="Zimmermann W."/>
            <person name="Wedler H."/>
            <person name="Wambutt R."/>
            <person name="Purnelle B."/>
            <person name="Goffeau A."/>
            <person name="Cadieu E."/>
            <person name="Dreano S."/>
            <person name="Gloux S."/>
            <person name="Lelaure V."/>
            <person name="Mottier S."/>
            <person name="Galibert F."/>
            <person name="Aves S.J."/>
            <person name="Xiang Z."/>
            <person name="Hunt C."/>
            <person name="Moore K."/>
            <person name="Hurst S.M."/>
            <person name="Lucas M."/>
            <person name="Rochet M."/>
            <person name="Gaillardin C."/>
            <person name="Tallada V.A."/>
            <person name="Garzon A."/>
            <person name="Thode G."/>
            <person name="Daga R.R."/>
            <person name="Cruzado L."/>
            <person name="Jimenez J."/>
            <person name="Sanchez M."/>
            <person name="del Rey F."/>
            <person name="Benito J."/>
            <person name="Dominguez A."/>
            <person name="Revuelta J.L."/>
            <person name="Moreno S."/>
            <person name="Armstrong J."/>
            <person name="Forsburg S.L."/>
            <person name="Cerutti L."/>
            <person name="Lowe T."/>
            <person name="McCombie W.R."/>
            <person name="Paulsen I."/>
            <person name="Potashkin J."/>
            <person name="Shpakovski G.V."/>
            <person name="Ussery D."/>
            <person name="Barrell B.G."/>
            <person name="Nurse P."/>
        </authorList>
    </citation>
    <scope>NUCLEOTIDE SEQUENCE [LARGE SCALE GENOMIC DNA]</scope>
    <source>
        <strain>972 / ATCC 24843</strain>
    </source>
</reference>
<reference key="4">
    <citation type="journal article" date="2001" name="Genetics">
        <title>Characterization of Schizosaccharomyces pombe mcm7(+) and cdc23(+) (MCM10) and interactions with replication checkpoints.</title>
        <authorList>
            <person name="Liang D.T."/>
            <person name="Forsburg S.L."/>
        </authorList>
    </citation>
    <scope>SUBUNIT</scope>
    <source>
        <strain>SP011</strain>
    </source>
</reference>
<reference key="5">
    <citation type="journal article" date="2008" name="J. Proteome Res.">
        <title>Phosphoproteome analysis of fission yeast.</title>
        <authorList>
            <person name="Wilson-Grady J.T."/>
            <person name="Villen J."/>
            <person name="Gygi S.P."/>
        </authorList>
    </citation>
    <scope>PHOSPHORYLATION [LARGE SCALE ANALYSIS] AT SER-37; SER-38; SER-41 AND SER-92</scope>
    <scope>IDENTIFICATION BY MASS SPECTROMETRY</scope>
</reference>
<dbReference type="EC" id="3.6.4.12"/>
<dbReference type="EMBL" id="X58824">
    <property type="protein sequence ID" value="CAA41628.1"/>
    <property type="molecule type" value="Genomic_DNA"/>
</dbReference>
<dbReference type="EMBL" id="CU329672">
    <property type="protein sequence ID" value="CAB53089.2"/>
    <property type="molecule type" value="Genomic_DNA"/>
</dbReference>
<dbReference type="PIR" id="S26640">
    <property type="entry name" value="S26640"/>
</dbReference>
<dbReference type="RefSeq" id="NP_588004.2">
    <property type="nucleotide sequence ID" value="NM_001022995.2"/>
</dbReference>
<dbReference type="SMR" id="P29458"/>
<dbReference type="ComplexPortal" id="CPX-2945">
    <property type="entry name" value="MCM complex"/>
</dbReference>
<dbReference type="FunCoup" id="P29458">
    <property type="interactions" value="705"/>
</dbReference>
<dbReference type="IntAct" id="P29458">
    <property type="interactions" value="10"/>
</dbReference>
<dbReference type="MINT" id="P29458"/>
<dbReference type="STRING" id="284812.P29458"/>
<dbReference type="iPTMnet" id="P29458"/>
<dbReference type="PaxDb" id="4896-SPCC16A11.17.1"/>
<dbReference type="EnsemblFungi" id="SPCC16A11.17.1">
    <property type="protein sequence ID" value="SPCC16A11.17.1:pep"/>
    <property type="gene ID" value="SPCC16A11.17"/>
</dbReference>
<dbReference type="GeneID" id="2539164"/>
<dbReference type="KEGG" id="spo:2539164"/>
<dbReference type="PomBase" id="SPCC16A11.17">
    <property type="gene designation" value="mcm4"/>
</dbReference>
<dbReference type="eggNOG" id="KOG0478">
    <property type="taxonomic scope" value="Eukaryota"/>
</dbReference>
<dbReference type="HOGENOM" id="CLU_000995_7_1_1"/>
<dbReference type="InParanoid" id="P29458"/>
<dbReference type="OMA" id="AFFKCNV"/>
<dbReference type="PhylomeDB" id="P29458"/>
<dbReference type="Reactome" id="R-SPO-176187">
    <property type="pathway name" value="Activation of ATR in response to replication stress"/>
</dbReference>
<dbReference type="Reactome" id="R-SPO-68867">
    <property type="pathway name" value="Assembly of the pre-replicative complex"/>
</dbReference>
<dbReference type="Reactome" id="R-SPO-68949">
    <property type="pathway name" value="Orc1 removal from chromatin"/>
</dbReference>
<dbReference type="Reactome" id="R-SPO-68962">
    <property type="pathway name" value="Activation of the pre-replicative complex"/>
</dbReference>
<dbReference type="Reactome" id="R-SPO-69052">
    <property type="pathway name" value="Switching of origins to a post-replicative state"/>
</dbReference>
<dbReference type="PRO" id="PR:P29458"/>
<dbReference type="Proteomes" id="UP000002485">
    <property type="component" value="Chromosome III"/>
</dbReference>
<dbReference type="GO" id="GO:0000785">
    <property type="term" value="C:chromatin"/>
    <property type="evidence" value="ECO:0000314"/>
    <property type="project" value="PomBase"/>
</dbReference>
<dbReference type="GO" id="GO:0031261">
    <property type="term" value="C:DNA replication preinitiation complex"/>
    <property type="evidence" value="ECO:0000305"/>
    <property type="project" value="PomBase"/>
</dbReference>
<dbReference type="GO" id="GO:0042555">
    <property type="term" value="C:MCM complex"/>
    <property type="evidence" value="ECO:0000314"/>
    <property type="project" value="PomBase"/>
</dbReference>
<dbReference type="GO" id="GO:0097373">
    <property type="term" value="C:MCM core complex"/>
    <property type="evidence" value="ECO:0000314"/>
    <property type="project" value="PomBase"/>
</dbReference>
<dbReference type="GO" id="GO:0005656">
    <property type="term" value="C:nuclear pre-replicative complex"/>
    <property type="evidence" value="ECO:0000305"/>
    <property type="project" value="PomBase"/>
</dbReference>
<dbReference type="GO" id="GO:0043596">
    <property type="term" value="C:nuclear replication fork"/>
    <property type="evidence" value="ECO:0000305"/>
    <property type="project" value="PomBase"/>
</dbReference>
<dbReference type="GO" id="GO:0005634">
    <property type="term" value="C:nucleus"/>
    <property type="evidence" value="ECO:0000314"/>
    <property type="project" value="PomBase"/>
</dbReference>
<dbReference type="GO" id="GO:0030875">
    <property type="term" value="C:rDNA protrusion"/>
    <property type="evidence" value="ECO:0000314"/>
    <property type="project" value="PomBase"/>
</dbReference>
<dbReference type="GO" id="GO:0005524">
    <property type="term" value="F:ATP binding"/>
    <property type="evidence" value="ECO:0007669"/>
    <property type="project" value="UniProtKB-KW"/>
</dbReference>
<dbReference type="GO" id="GO:0016887">
    <property type="term" value="F:ATP hydrolysis activity"/>
    <property type="evidence" value="ECO:0007669"/>
    <property type="project" value="RHEA"/>
</dbReference>
<dbReference type="GO" id="GO:0003682">
    <property type="term" value="F:chromatin binding"/>
    <property type="evidence" value="ECO:0000314"/>
    <property type="project" value="PomBase"/>
</dbReference>
<dbReference type="GO" id="GO:0003677">
    <property type="term" value="F:DNA binding"/>
    <property type="evidence" value="ECO:0007669"/>
    <property type="project" value="UniProtKB-KW"/>
</dbReference>
<dbReference type="GO" id="GO:0003678">
    <property type="term" value="F:DNA helicase activity"/>
    <property type="evidence" value="ECO:0007669"/>
    <property type="project" value="InterPro"/>
</dbReference>
<dbReference type="GO" id="GO:0006260">
    <property type="term" value="P:DNA replication"/>
    <property type="evidence" value="ECO:0000318"/>
    <property type="project" value="GO_Central"/>
</dbReference>
<dbReference type="GO" id="GO:0006270">
    <property type="term" value="P:DNA replication initiation"/>
    <property type="evidence" value="ECO:0000315"/>
    <property type="project" value="PomBase"/>
</dbReference>
<dbReference type="GO" id="GO:0006271">
    <property type="term" value="P:DNA strand elongation involved in DNA replication"/>
    <property type="evidence" value="ECO:0000318"/>
    <property type="project" value="GO_Central"/>
</dbReference>
<dbReference type="GO" id="GO:0000727">
    <property type="term" value="P:double-strand break repair via break-induced replication"/>
    <property type="evidence" value="ECO:0000318"/>
    <property type="project" value="GO_Central"/>
</dbReference>
<dbReference type="GO" id="GO:1902975">
    <property type="term" value="P:mitotic DNA replication initiation"/>
    <property type="evidence" value="ECO:0000269"/>
    <property type="project" value="PomBase"/>
</dbReference>
<dbReference type="GO" id="GO:0033260">
    <property type="term" value="P:nuclear DNA replication"/>
    <property type="evidence" value="ECO:0000315"/>
    <property type="project" value="PomBase"/>
</dbReference>
<dbReference type="GO" id="GO:0006279">
    <property type="term" value="P:premeiotic DNA replication"/>
    <property type="evidence" value="ECO:0000314"/>
    <property type="project" value="ComplexPortal"/>
</dbReference>
<dbReference type="CDD" id="cd17755">
    <property type="entry name" value="MCM4"/>
    <property type="match status" value="1"/>
</dbReference>
<dbReference type="FunFam" id="2.20.28.10:FF:000003">
    <property type="entry name" value="DNA helicase"/>
    <property type="match status" value="1"/>
</dbReference>
<dbReference type="FunFam" id="3.30.1640.10:FF:000011">
    <property type="entry name" value="DNA helicase"/>
    <property type="match status" value="1"/>
</dbReference>
<dbReference type="FunFam" id="3.40.50.300:FF:000217">
    <property type="entry name" value="DNA helicase"/>
    <property type="match status" value="1"/>
</dbReference>
<dbReference type="Gene3D" id="2.20.28.10">
    <property type="match status" value="1"/>
</dbReference>
<dbReference type="Gene3D" id="3.30.1640.10">
    <property type="entry name" value="mini-chromosome maintenance (MCM) complex, chain A, domain 1"/>
    <property type="match status" value="1"/>
</dbReference>
<dbReference type="Gene3D" id="2.40.50.140">
    <property type="entry name" value="Nucleic acid-binding proteins"/>
    <property type="match status" value="1"/>
</dbReference>
<dbReference type="Gene3D" id="3.40.50.300">
    <property type="entry name" value="P-loop containing nucleotide triphosphate hydrolases"/>
    <property type="match status" value="1"/>
</dbReference>
<dbReference type="InterPro" id="IPR031327">
    <property type="entry name" value="MCM"/>
</dbReference>
<dbReference type="InterPro" id="IPR008047">
    <property type="entry name" value="MCM_4"/>
</dbReference>
<dbReference type="InterPro" id="IPR018525">
    <property type="entry name" value="MCM_CS"/>
</dbReference>
<dbReference type="InterPro" id="IPR001208">
    <property type="entry name" value="MCM_dom"/>
</dbReference>
<dbReference type="InterPro" id="IPR041562">
    <property type="entry name" value="MCM_lid"/>
</dbReference>
<dbReference type="InterPro" id="IPR027925">
    <property type="entry name" value="MCM_N"/>
</dbReference>
<dbReference type="InterPro" id="IPR033762">
    <property type="entry name" value="MCM_OB"/>
</dbReference>
<dbReference type="InterPro" id="IPR012340">
    <property type="entry name" value="NA-bd_OB-fold"/>
</dbReference>
<dbReference type="InterPro" id="IPR027417">
    <property type="entry name" value="P-loop_NTPase"/>
</dbReference>
<dbReference type="PANTHER" id="PTHR11630">
    <property type="entry name" value="DNA REPLICATION LICENSING FACTOR MCM FAMILY MEMBER"/>
    <property type="match status" value="1"/>
</dbReference>
<dbReference type="PANTHER" id="PTHR11630:SF66">
    <property type="entry name" value="DNA REPLICATION LICENSING FACTOR MCM4"/>
    <property type="match status" value="1"/>
</dbReference>
<dbReference type="Pfam" id="PF00493">
    <property type="entry name" value="MCM"/>
    <property type="match status" value="1"/>
</dbReference>
<dbReference type="Pfam" id="PF21128">
    <property type="entry name" value="MCM4_WHD"/>
    <property type="match status" value="1"/>
</dbReference>
<dbReference type="Pfam" id="PF17855">
    <property type="entry name" value="MCM_lid"/>
    <property type="match status" value="1"/>
</dbReference>
<dbReference type="Pfam" id="PF14551">
    <property type="entry name" value="MCM_N"/>
    <property type="match status" value="1"/>
</dbReference>
<dbReference type="Pfam" id="PF17207">
    <property type="entry name" value="MCM_OB"/>
    <property type="match status" value="1"/>
</dbReference>
<dbReference type="PRINTS" id="PR01657">
    <property type="entry name" value="MCMFAMILY"/>
</dbReference>
<dbReference type="PRINTS" id="PR01660">
    <property type="entry name" value="MCMPROTEIN4"/>
</dbReference>
<dbReference type="SMART" id="SM00350">
    <property type="entry name" value="MCM"/>
    <property type="match status" value="1"/>
</dbReference>
<dbReference type="SUPFAM" id="SSF50249">
    <property type="entry name" value="Nucleic acid-binding proteins"/>
    <property type="match status" value="1"/>
</dbReference>
<dbReference type="SUPFAM" id="SSF52540">
    <property type="entry name" value="P-loop containing nucleoside triphosphate hydrolases"/>
    <property type="match status" value="1"/>
</dbReference>
<dbReference type="PROSITE" id="PS00847">
    <property type="entry name" value="MCM_1"/>
    <property type="match status" value="1"/>
</dbReference>
<dbReference type="PROSITE" id="PS50051">
    <property type="entry name" value="MCM_2"/>
    <property type="match status" value="1"/>
</dbReference>
<organism>
    <name type="scientific">Schizosaccharomyces pombe (strain 972 / ATCC 24843)</name>
    <name type="common">Fission yeast</name>
    <dbReference type="NCBI Taxonomy" id="284812"/>
    <lineage>
        <taxon>Eukaryota</taxon>
        <taxon>Fungi</taxon>
        <taxon>Dikarya</taxon>
        <taxon>Ascomycota</taxon>
        <taxon>Taphrinomycotina</taxon>
        <taxon>Schizosaccharomycetes</taxon>
        <taxon>Schizosaccharomycetales</taxon>
        <taxon>Schizosaccharomycetaceae</taxon>
        <taxon>Schizosaccharomyces</taxon>
    </lineage>
</organism>